<feature type="chain" id="PRO_0000248775" description="Proline--tRNA ligase">
    <location>
        <begin position="1"/>
        <end position="617"/>
    </location>
</feature>
<organism>
    <name type="scientific">Streptococcus agalactiae serotype V (strain ATCC BAA-611 / 2603 V/R)</name>
    <dbReference type="NCBI Taxonomy" id="208435"/>
    <lineage>
        <taxon>Bacteria</taxon>
        <taxon>Bacillati</taxon>
        <taxon>Bacillota</taxon>
        <taxon>Bacilli</taxon>
        <taxon>Lactobacillales</taxon>
        <taxon>Streptococcaceae</taxon>
        <taxon>Streptococcus</taxon>
    </lineage>
</organism>
<accession>Q8DXD8</accession>
<evidence type="ECO:0000255" key="1">
    <source>
        <dbReference type="HAMAP-Rule" id="MF_01569"/>
    </source>
</evidence>
<keyword id="KW-0030">Aminoacyl-tRNA synthetase</keyword>
<keyword id="KW-0067">ATP-binding</keyword>
<keyword id="KW-0963">Cytoplasm</keyword>
<keyword id="KW-0436">Ligase</keyword>
<keyword id="KW-0547">Nucleotide-binding</keyword>
<keyword id="KW-0648">Protein biosynthesis</keyword>
<keyword id="KW-1185">Reference proteome</keyword>
<name>SYP_STRA5</name>
<protein>
    <recommendedName>
        <fullName evidence="1">Proline--tRNA ligase</fullName>
        <ecNumber evidence="1">6.1.1.15</ecNumber>
    </recommendedName>
    <alternativeName>
        <fullName evidence="1">Prolyl-tRNA synthetase</fullName>
        <shortName evidence="1">ProRS</shortName>
    </alternativeName>
</protein>
<proteinExistence type="inferred from homology"/>
<sequence>MKQSKMLIPTLREMPSDAQVISHALMVRAGYVRQVSAGIYAYLPLANRTIEKFKTIMRQEFEKIGAVEMLAPALLTADLWRESGRYETYGEDLYKLKNRDQSDFILGPTHEETFTTLVRDAVKSYKQLPLNLYQIQSKYRDEKRPRNGLLRTREFIMKDGYSFHKDYEDLDVTYEDYRKAYEAIFTRAGLDFKGIIGDGGAMGGKDSQEFMAVTPNRTDLNRWLVLDKTIPSIDDIPEDVLEEIKVELSAWLVSGEDTIAYSTESSYAANLEMATNEYKPSTKAATFEEVTKVETPNCKSIDEVAGFLSIDENQTIKTLLFIADEQPVVALLVGNDQVNDVKLKNYLAADFLEPASEEQAKEIFGAGFGSLGPVNLPDSVKIIADRKVQDLANAVSGANQDGYHFTGVNPERDFTAEYVDIREVKEGEISPDGKGTLKFARGIEIGHIFKLGTRYSDSMGANILDENGRSNPIVMGCYGIGVSRILSAVIEQHARLFVNKTPKGAYRFAWGINFPEELAPFDVHLITVNVKDQESQDLTEKIEADLMLKGYEVLTDDRNERVGSKFSDSDLIGLPIRVTVGKKASEGIVEVKIKASGDTIEVHADNLIETLEILTKK</sequence>
<dbReference type="EC" id="6.1.1.15" evidence="1"/>
<dbReference type="EMBL" id="AE009948">
    <property type="protein sequence ID" value="AAN00775.1"/>
    <property type="molecule type" value="Genomic_DNA"/>
</dbReference>
<dbReference type="RefSeq" id="NP_688902.1">
    <property type="nucleotide sequence ID" value="NC_004116.1"/>
</dbReference>
<dbReference type="RefSeq" id="WP_000814045.1">
    <property type="nucleotide sequence ID" value="NC_004116.1"/>
</dbReference>
<dbReference type="SMR" id="Q8DXD8"/>
<dbReference type="STRING" id="208435.SAG1913"/>
<dbReference type="KEGG" id="sag:SAG1913"/>
<dbReference type="PATRIC" id="fig|208435.3.peg.1917"/>
<dbReference type="HOGENOM" id="CLU_016739_0_0_9"/>
<dbReference type="OrthoDB" id="9809052at2"/>
<dbReference type="Proteomes" id="UP000000821">
    <property type="component" value="Chromosome"/>
</dbReference>
<dbReference type="GO" id="GO:0005829">
    <property type="term" value="C:cytosol"/>
    <property type="evidence" value="ECO:0007669"/>
    <property type="project" value="TreeGrafter"/>
</dbReference>
<dbReference type="GO" id="GO:0002161">
    <property type="term" value="F:aminoacyl-tRNA deacylase activity"/>
    <property type="evidence" value="ECO:0007669"/>
    <property type="project" value="InterPro"/>
</dbReference>
<dbReference type="GO" id="GO:0005524">
    <property type="term" value="F:ATP binding"/>
    <property type="evidence" value="ECO:0007669"/>
    <property type="project" value="UniProtKB-UniRule"/>
</dbReference>
<dbReference type="GO" id="GO:0140096">
    <property type="term" value="F:catalytic activity, acting on a protein"/>
    <property type="evidence" value="ECO:0007669"/>
    <property type="project" value="UniProtKB-ARBA"/>
</dbReference>
<dbReference type="GO" id="GO:0004827">
    <property type="term" value="F:proline-tRNA ligase activity"/>
    <property type="evidence" value="ECO:0007669"/>
    <property type="project" value="UniProtKB-UniRule"/>
</dbReference>
<dbReference type="GO" id="GO:0016740">
    <property type="term" value="F:transferase activity"/>
    <property type="evidence" value="ECO:0007669"/>
    <property type="project" value="UniProtKB-ARBA"/>
</dbReference>
<dbReference type="GO" id="GO:0006433">
    <property type="term" value="P:prolyl-tRNA aminoacylation"/>
    <property type="evidence" value="ECO:0007669"/>
    <property type="project" value="UniProtKB-UniRule"/>
</dbReference>
<dbReference type="CDD" id="cd04334">
    <property type="entry name" value="ProRS-INS"/>
    <property type="match status" value="1"/>
</dbReference>
<dbReference type="CDD" id="cd00861">
    <property type="entry name" value="ProRS_anticodon_short"/>
    <property type="match status" value="1"/>
</dbReference>
<dbReference type="FunFam" id="3.40.50.800:FF:000011">
    <property type="entry name" value="Proline--tRNA ligase"/>
    <property type="match status" value="1"/>
</dbReference>
<dbReference type="Gene3D" id="3.40.50.800">
    <property type="entry name" value="Anticodon-binding domain"/>
    <property type="match status" value="1"/>
</dbReference>
<dbReference type="Gene3D" id="3.30.930.10">
    <property type="entry name" value="Bira Bifunctional Protein, Domain 2"/>
    <property type="match status" value="2"/>
</dbReference>
<dbReference type="Gene3D" id="3.90.960.10">
    <property type="entry name" value="YbaK/aminoacyl-tRNA synthetase-associated domain"/>
    <property type="match status" value="1"/>
</dbReference>
<dbReference type="HAMAP" id="MF_01569">
    <property type="entry name" value="Pro_tRNA_synth_type1"/>
    <property type="match status" value="1"/>
</dbReference>
<dbReference type="InterPro" id="IPR002314">
    <property type="entry name" value="aa-tRNA-synt_IIb"/>
</dbReference>
<dbReference type="InterPro" id="IPR006195">
    <property type="entry name" value="aa-tRNA-synth_II"/>
</dbReference>
<dbReference type="InterPro" id="IPR045864">
    <property type="entry name" value="aa-tRNA-synth_II/BPL/LPL"/>
</dbReference>
<dbReference type="InterPro" id="IPR004154">
    <property type="entry name" value="Anticodon-bd"/>
</dbReference>
<dbReference type="InterPro" id="IPR036621">
    <property type="entry name" value="Anticodon-bd_dom_sf"/>
</dbReference>
<dbReference type="InterPro" id="IPR002316">
    <property type="entry name" value="Pro-tRNA-ligase_IIa"/>
</dbReference>
<dbReference type="InterPro" id="IPR004500">
    <property type="entry name" value="Pro-tRNA-synth_IIa_bac-type"/>
</dbReference>
<dbReference type="InterPro" id="IPR023717">
    <property type="entry name" value="Pro-tRNA-Synthase_IIa_type1"/>
</dbReference>
<dbReference type="InterPro" id="IPR050062">
    <property type="entry name" value="Pro-tRNA_synthetase"/>
</dbReference>
<dbReference type="InterPro" id="IPR044140">
    <property type="entry name" value="ProRS_anticodon_short"/>
</dbReference>
<dbReference type="InterPro" id="IPR036754">
    <property type="entry name" value="YbaK/aa-tRNA-synt-asso_dom_sf"/>
</dbReference>
<dbReference type="InterPro" id="IPR007214">
    <property type="entry name" value="YbaK/aa-tRNA-synth-assoc-dom"/>
</dbReference>
<dbReference type="NCBIfam" id="NF006625">
    <property type="entry name" value="PRK09194.1"/>
    <property type="match status" value="1"/>
</dbReference>
<dbReference type="NCBIfam" id="TIGR00409">
    <property type="entry name" value="proS_fam_II"/>
    <property type="match status" value="2"/>
</dbReference>
<dbReference type="PANTHER" id="PTHR42753">
    <property type="entry name" value="MITOCHONDRIAL RIBOSOME PROTEIN L39/PROLYL-TRNA LIGASE FAMILY MEMBER"/>
    <property type="match status" value="1"/>
</dbReference>
<dbReference type="PANTHER" id="PTHR42753:SF2">
    <property type="entry name" value="PROLINE--TRNA LIGASE"/>
    <property type="match status" value="1"/>
</dbReference>
<dbReference type="Pfam" id="PF03129">
    <property type="entry name" value="HGTP_anticodon"/>
    <property type="match status" value="1"/>
</dbReference>
<dbReference type="Pfam" id="PF00587">
    <property type="entry name" value="tRNA-synt_2b"/>
    <property type="match status" value="1"/>
</dbReference>
<dbReference type="Pfam" id="PF04073">
    <property type="entry name" value="tRNA_edit"/>
    <property type="match status" value="1"/>
</dbReference>
<dbReference type="PRINTS" id="PR01046">
    <property type="entry name" value="TRNASYNTHPRO"/>
</dbReference>
<dbReference type="SUPFAM" id="SSF52954">
    <property type="entry name" value="Class II aaRS ABD-related"/>
    <property type="match status" value="1"/>
</dbReference>
<dbReference type="SUPFAM" id="SSF55681">
    <property type="entry name" value="Class II aaRS and biotin synthetases"/>
    <property type="match status" value="1"/>
</dbReference>
<dbReference type="SUPFAM" id="SSF55826">
    <property type="entry name" value="YbaK/ProRS associated domain"/>
    <property type="match status" value="1"/>
</dbReference>
<dbReference type="PROSITE" id="PS50862">
    <property type="entry name" value="AA_TRNA_LIGASE_II"/>
    <property type="match status" value="1"/>
</dbReference>
<gene>
    <name evidence="1" type="primary">proS</name>
    <name type="ordered locus">SAG1913</name>
</gene>
<comment type="function">
    <text evidence="1">Catalyzes the attachment of proline to tRNA(Pro) in a two-step reaction: proline is first activated by ATP to form Pro-AMP and then transferred to the acceptor end of tRNA(Pro). As ProRS can inadvertently accommodate and process non-cognate amino acids such as alanine and cysteine, to avoid such errors it has two additional distinct editing activities against alanine. One activity is designated as 'pretransfer' editing and involves the tRNA(Pro)-independent hydrolysis of activated Ala-AMP. The other activity is designated 'posttransfer' editing and involves deacylation of mischarged Ala-tRNA(Pro). The misacylated Cys-tRNA(Pro) is not edited by ProRS.</text>
</comment>
<comment type="catalytic activity">
    <reaction evidence="1">
        <text>tRNA(Pro) + L-proline + ATP = L-prolyl-tRNA(Pro) + AMP + diphosphate</text>
        <dbReference type="Rhea" id="RHEA:14305"/>
        <dbReference type="Rhea" id="RHEA-COMP:9700"/>
        <dbReference type="Rhea" id="RHEA-COMP:9702"/>
        <dbReference type="ChEBI" id="CHEBI:30616"/>
        <dbReference type="ChEBI" id="CHEBI:33019"/>
        <dbReference type="ChEBI" id="CHEBI:60039"/>
        <dbReference type="ChEBI" id="CHEBI:78442"/>
        <dbReference type="ChEBI" id="CHEBI:78532"/>
        <dbReference type="ChEBI" id="CHEBI:456215"/>
        <dbReference type="EC" id="6.1.1.15"/>
    </reaction>
</comment>
<comment type="subunit">
    <text evidence="1">Homodimer.</text>
</comment>
<comment type="subcellular location">
    <subcellularLocation>
        <location evidence="1">Cytoplasm</location>
    </subcellularLocation>
</comment>
<comment type="domain">
    <text evidence="1">Consists of three domains: the N-terminal catalytic domain, the editing domain and the C-terminal anticodon-binding domain.</text>
</comment>
<comment type="similarity">
    <text evidence="1">Belongs to the class-II aminoacyl-tRNA synthetase family. ProS type 1 subfamily.</text>
</comment>
<reference key="1">
    <citation type="journal article" date="2002" name="Proc. Natl. Acad. Sci. U.S.A.">
        <title>Complete genome sequence and comparative genomic analysis of an emerging human pathogen, serotype V Streptococcus agalactiae.</title>
        <authorList>
            <person name="Tettelin H."/>
            <person name="Masignani V."/>
            <person name="Cieslewicz M.J."/>
            <person name="Eisen J.A."/>
            <person name="Peterson S.N."/>
            <person name="Wessels M.R."/>
            <person name="Paulsen I.T."/>
            <person name="Nelson K.E."/>
            <person name="Margarit I."/>
            <person name="Read T.D."/>
            <person name="Madoff L.C."/>
            <person name="Wolf A.M."/>
            <person name="Beanan M.J."/>
            <person name="Brinkac L.M."/>
            <person name="Daugherty S.C."/>
            <person name="DeBoy R.T."/>
            <person name="Durkin A.S."/>
            <person name="Kolonay J.F."/>
            <person name="Madupu R."/>
            <person name="Lewis M.R."/>
            <person name="Radune D."/>
            <person name="Fedorova N.B."/>
            <person name="Scanlan D."/>
            <person name="Khouri H.M."/>
            <person name="Mulligan S."/>
            <person name="Carty H.A."/>
            <person name="Cline R.T."/>
            <person name="Van Aken S.E."/>
            <person name="Gill J."/>
            <person name="Scarselli M."/>
            <person name="Mora M."/>
            <person name="Iacobini E.T."/>
            <person name="Brettoni C."/>
            <person name="Galli G."/>
            <person name="Mariani M."/>
            <person name="Vegni F."/>
            <person name="Maione D."/>
            <person name="Rinaudo D."/>
            <person name="Rappuoli R."/>
            <person name="Telford J.L."/>
            <person name="Kasper D.L."/>
            <person name="Grandi G."/>
            <person name="Fraser C.M."/>
        </authorList>
    </citation>
    <scope>NUCLEOTIDE SEQUENCE [LARGE SCALE GENOMIC DNA]</scope>
    <source>
        <strain>ATCC BAA-611 / 2603 V/R</strain>
    </source>
</reference>